<evidence type="ECO:0000250" key="1"/>
<evidence type="ECO:0000255" key="2"/>
<evidence type="ECO:0000256" key="3">
    <source>
        <dbReference type="SAM" id="MobiDB-lite"/>
    </source>
</evidence>
<evidence type="ECO:0000269" key="4">
    <source>
    </source>
</evidence>
<evidence type="ECO:0000305" key="5"/>
<organism>
    <name type="scientific">Arthroderma benhamiae (strain ATCC MYA-4681 / CBS 112371)</name>
    <name type="common">Trichophyton mentagrophytes</name>
    <dbReference type="NCBI Taxonomy" id="663331"/>
    <lineage>
        <taxon>Eukaryota</taxon>
        <taxon>Fungi</taxon>
        <taxon>Dikarya</taxon>
        <taxon>Ascomycota</taxon>
        <taxon>Pezizomycotina</taxon>
        <taxon>Eurotiomycetes</taxon>
        <taxon>Eurotiomycetidae</taxon>
        <taxon>Onygenales</taxon>
        <taxon>Arthrodermataceae</taxon>
        <taxon>Trichophyton</taxon>
    </lineage>
</organism>
<dbReference type="EC" id="3.4.14.-"/>
<dbReference type="EMBL" id="ABSU01000006">
    <property type="protein sequence ID" value="EFE34254.1"/>
    <property type="molecule type" value="Genomic_DNA"/>
</dbReference>
<dbReference type="RefSeq" id="XP_003014894.1">
    <property type="nucleotide sequence ID" value="XM_003014848.1"/>
</dbReference>
<dbReference type="SMR" id="D4ARB1"/>
<dbReference type="STRING" id="663331.D4ARB1"/>
<dbReference type="ESTHER" id="triru-DPPV">
    <property type="family name" value="Prolyl_oligopeptidase_S9"/>
</dbReference>
<dbReference type="GlyCosmos" id="D4ARB1">
    <property type="glycosylation" value="5 sites, No reported glycans"/>
</dbReference>
<dbReference type="GeneID" id="9527197"/>
<dbReference type="KEGG" id="abe:ARB_06651"/>
<dbReference type="eggNOG" id="KOG2100">
    <property type="taxonomic scope" value="Eukaryota"/>
</dbReference>
<dbReference type="HOGENOM" id="CLU_008615_0_1_1"/>
<dbReference type="OMA" id="YPVRYWD"/>
<dbReference type="OrthoDB" id="416344at2759"/>
<dbReference type="Proteomes" id="UP000008866">
    <property type="component" value="Unassembled WGS sequence"/>
</dbReference>
<dbReference type="GO" id="GO:0005576">
    <property type="term" value="C:extracellular region"/>
    <property type="evidence" value="ECO:0007669"/>
    <property type="project" value="UniProtKB-SubCell"/>
</dbReference>
<dbReference type="GO" id="GO:0004177">
    <property type="term" value="F:aminopeptidase activity"/>
    <property type="evidence" value="ECO:0007669"/>
    <property type="project" value="UniProtKB-KW"/>
</dbReference>
<dbReference type="GO" id="GO:0004252">
    <property type="term" value="F:serine-type endopeptidase activity"/>
    <property type="evidence" value="ECO:0007669"/>
    <property type="project" value="TreeGrafter"/>
</dbReference>
<dbReference type="GO" id="GO:0006508">
    <property type="term" value="P:proteolysis"/>
    <property type="evidence" value="ECO:0007669"/>
    <property type="project" value="UniProtKB-KW"/>
</dbReference>
<dbReference type="FunFam" id="3.40.50.1820:FF:000028">
    <property type="entry name" value="S9 family peptidase"/>
    <property type="match status" value="1"/>
</dbReference>
<dbReference type="Gene3D" id="3.40.50.1820">
    <property type="entry name" value="alpha/beta hydrolase"/>
    <property type="match status" value="1"/>
</dbReference>
<dbReference type="Gene3D" id="2.120.10.30">
    <property type="entry name" value="TolB, C-terminal domain"/>
    <property type="match status" value="1"/>
</dbReference>
<dbReference type="InterPro" id="IPR011042">
    <property type="entry name" value="6-blade_b-propeller_TolB-like"/>
</dbReference>
<dbReference type="InterPro" id="IPR029058">
    <property type="entry name" value="AB_hydrolase_fold"/>
</dbReference>
<dbReference type="InterPro" id="IPR011659">
    <property type="entry name" value="PD40"/>
</dbReference>
<dbReference type="InterPro" id="IPR001375">
    <property type="entry name" value="Peptidase_S9_cat"/>
</dbReference>
<dbReference type="PANTHER" id="PTHR42776:SF11">
    <property type="entry name" value="DIPEPTIDYL-PEPTIDASE 5-RELATED"/>
    <property type="match status" value="1"/>
</dbReference>
<dbReference type="PANTHER" id="PTHR42776">
    <property type="entry name" value="SERINE PEPTIDASE S9 FAMILY MEMBER"/>
    <property type="match status" value="1"/>
</dbReference>
<dbReference type="Pfam" id="PF07676">
    <property type="entry name" value="PD40"/>
    <property type="match status" value="1"/>
</dbReference>
<dbReference type="Pfam" id="PF00326">
    <property type="entry name" value="Peptidase_S9"/>
    <property type="match status" value="1"/>
</dbReference>
<dbReference type="SUPFAM" id="SSF53474">
    <property type="entry name" value="alpha/beta-Hydrolases"/>
    <property type="match status" value="1"/>
</dbReference>
<dbReference type="SUPFAM" id="SSF82171">
    <property type="entry name" value="DPP6 N-terminal domain-like"/>
    <property type="match status" value="1"/>
</dbReference>
<protein>
    <recommendedName>
        <fullName>Probable dipeptidyl-peptidase 5</fullName>
        <ecNumber>3.4.14.-</ecNumber>
    </recommendedName>
    <alternativeName>
        <fullName>Dipeptidyl-peptidase V</fullName>
        <shortName>DPP V</shortName>
        <shortName>DppV</shortName>
    </alternativeName>
</protein>
<reference key="1">
    <citation type="journal article" date="2011" name="Genome Biol.">
        <title>Comparative and functional genomics provide insights into the pathogenicity of dermatophytic fungi.</title>
        <authorList>
            <person name="Burmester A."/>
            <person name="Shelest E."/>
            <person name="Gloeckner G."/>
            <person name="Heddergott C."/>
            <person name="Schindler S."/>
            <person name="Staib P."/>
            <person name="Heidel A."/>
            <person name="Felder M."/>
            <person name="Petzold A."/>
            <person name="Szafranski K."/>
            <person name="Feuermann M."/>
            <person name="Pedruzzi I."/>
            <person name="Priebe S."/>
            <person name="Groth M."/>
            <person name="Winkler R."/>
            <person name="Li W."/>
            <person name="Kniemeyer O."/>
            <person name="Schroeckh V."/>
            <person name="Hertweck C."/>
            <person name="Hube B."/>
            <person name="White T.C."/>
            <person name="Platzer M."/>
            <person name="Guthke R."/>
            <person name="Heitman J."/>
            <person name="Woestemeyer J."/>
            <person name="Zipfel P.F."/>
            <person name="Monod M."/>
            <person name="Brakhage A.A."/>
        </authorList>
    </citation>
    <scope>NUCLEOTIDE SEQUENCE [LARGE SCALE GENOMIC DNA]</scope>
    <scope>IDENTIFICATION BY MASS SPECTROMETRY</scope>
    <scope>SUBCELLULAR LOCATION</scope>
    <source>
        <strain>ATCC MYA-4681 / CBS 112371</strain>
    </source>
</reference>
<feature type="signal peptide" evidence="2">
    <location>
        <begin position="1"/>
        <end position="19"/>
    </location>
</feature>
<feature type="chain" id="PRO_0000397816" description="Probable dipeptidyl-peptidase 5">
    <location>
        <begin position="20"/>
        <end position="726"/>
    </location>
</feature>
<feature type="region of interest" description="Disordered" evidence="3">
    <location>
        <begin position="269"/>
        <end position="291"/>
    </location>
</feature>
<feature type="active site" description="Charge relay system" evidence="1">
    <location>
        <position position="558"/>
    </location>
</feature>
<feature type="active site" description="Charge relay system" evidence="1">
    <location>
        <position position="641"/>
    </location>
</feature>
<feature type="active site" description="Charge relay system" evidence="1">
    <location>
        <position position="673"/>
    </location>
</feature>
<feature type="glycosylation site" description="N-linked (GlcNAc...) asparagine" evidence="2">
    <location>
        <position position="96"/>
    </location>
</feature>
<feature type="glycosylation site" description="N-linked (GlcNAc...) asparagine" evidence="2">
    <location>
        <position position="252"/>
    </location>
</feature>
<feature type="glycosylation site" description="N-linked (GlcNAc...) asparagine" evidence="2">
    <location>
        <position position="485"/>
    </location>
</feature>
<feature type="glycosylation site" description="N-linked (GlcNAc...) asparagine" evidence="2">
    <location>
        <position position="605"/>
    </location>
</feature>
<feature type="glycosylation site" description="N-linked (GlcNAc...) asparagine" evidence="2">
    <location>
        <position position="699"/>
    </location>
</feature>
<accession>D4ARB1</accession>
<sequence length="726" mass="80085">MAAAKWLIASLAFASSGLAFTPEDFISAPRRGEAIPDPKGELAVFHVSKYNFDKKDRPSGWNLLNLKNGDISVLTTDSDVSEITWLGDGTKVVYVNGTDSVKGGVGIWISDAKNFGNAYKAGSVNGAFSGLKLAKSGDKINFVGYGQSTTKGDLYNEAAAKEAVSSARIYDSLFVRHWDTYVSTQFNAVFSGALTKNGDKYSFDGKLKNLVQPVKYAESPYPPFGGSGDYDLSSDGKTVAFMSKAPELPKANLTTSYIFLVPHDGSRVAEPINKRNGPRTPQGIEGASSSPVFSPDGKRIAYLQMATKNYESDRRVIHIAEVGSNKPVQRIASNWDRSPEAVKWSSDGRTLYVTAEDHATGKLFTLPADARDNHKPEVVKHDGSVSSFYFVGSSKSVLISGNSLWSNALYQVATPGRPNRKLFYANEHDPELKGLGPNDIEPLWVDGARTKIHSWIVKPTGFDKNKVYPLAFLIHGGPQGSWGDNWSTRWNPRVWADQGYVVVAPNPTGSTGFGQKLTDDITNDWGGAPYKDLVKIWEHVHNNIKYIDTDNGIAAGASFGGFMVNWIQGQDLGRKFKALVSHDGTFVGSSKIGTDELFFIEHDFNGTFFEARQNYDRWDCSKPELVAKWSTPQLVVHNDFDFRLSVAEGVGLFNVLQEKGVPSRFLNFPDETHWVTKPENSLVWHQQVLGWVNKWSGINKSNPKSIKLSDCPIEVVDHEAHSYFDY</sequence>
<comment type="function">
    <text evidence="1">Extracellular dipeptidyl-peptidase which removes N-terminal dipeptides sequentially from polypeptides having unsubstituted N-termini. Contributes to pathogenicity (By similarity).</text>
</comment>
<comment type="subcellular location">
    <subcellularLocation>
        <location evidence="4">Secreted</location>
    </subcellularLocation>
</comment>
<comment type="similarity">
    <text evidence="5">Belongs to the peptidase S9C family.</text>
</comment>
<keyword id="KW-0031">Aminopeptidase</keyword>
<keyword id="KW-0325">Glycoprotein</keyword>
<keyword id="KW-0378">Hydrolase</keyword>
<keyword id="KW-0645">Protease</keyword>
<keyword id="KW-1185">Reference proteome</keyword>
<keyword id="KW-0964">Secreted</keyword>
<keyword id="KW-0720">Serine protease</keyword>
<keyword id="KW-0732">Signal</keyword>
<keyword id="KW-0843">Virulence</keyword>
<proteinExistence type="evidence at protein level"/>
<name>DPP5_ARTBC</name>
<gene>
    <name type="primary">DPP5</name>
    <name type="ORF">ARB_06651</name>
</gene>